<evidence type="ECO:0000250" key="1"/>
<evidence type="ECO:0000250" key="2">
    <source>
        <dbReference type="UniProtKB" id="O60237"/>
    </source>
</evidence>
<evidence type="ECO:0000256" key="3">
    <source>
        <dbReference type="SAM" id="MobiDB-lite"/>
    </source>
</evidence>
<evidence type="ECO:0000303" key="4">
    <source>
    </source>
</evidence>
<evidence type="ECO:0007744" key="5">
    <source>
    </source>
</evidence>
<proteinExistence type="evidence at protein level"/>
<gene>
    <name type="primary">Ppp1r12b</name>
    <name type="synonym">Mypt2</name>
</gene>
<organism>
    <name type="scientific">Mus musculus</name>
    <name type="common">Mouse</name>
    <dbReference type="NCBI Taxonomy" id="10090"/>
    <lineage>
        <taxon>Eukaryota</taxon>
        <taxon>Metazoa</taxon>
        <taxon>Chordata</taxon>
        <taxon>Craniata</taxon>
        <taxon>Vertebrata</taxon>
        <taxon>Euteleostomi</taxon>
        <taxon>Mammalia</taxon>
        <taxon>Eutheria</taxon>
        <taxon>Euarchontoglires</taxon>
        <taxon>Glires</taxon>
        <taxon>Rodentia</taxon>
        <taxon>Myomorpha</taxon>
        <taxon>Muroidea</taxon>
        <taxon>Muridae</taxon>
        <taxon>Murinae</taxon>
        <taxon>Mus</taxon>
        <taxon>Mus</taxon>
    </lineage>
</organism>
<protein>
    <recommendedName>
        <fullName>Protein phosphatase 1 regulatory subunit 12B</fullName>
    </recommendedName>
    <alternativeName>
        <fullName>Myosin phosphatase-targeting subunit 2</fullName>
        <shortName>Myosin phosphatase target subunit 2</shortName>
    </alternativeName>
</protein>
<accession>Q8BG95</accession>
<accession>Q8BXY7</accession>
<accession>Q9D8S6</accession>
<sequence>MAELEHLGGKRAESARARRAEQLRRWRGSLTEQEPAERQGAGRQLQTRRGSPRVRFEDGAVFLAACSSGDTDEVKKLLARGADINTVNVDGLTALHQACIDENLDMVKFLVENRANVNQQDNEGWTPLHAAASCGYLNIAEYFISHGASVGIVNSEGEVPSDLAEEPAMKDLLLEQVKKQGVDLEQSRKEEEQQMLQDARQWLNSGRIEDVRQARSGATALHVAAAKGYSEVLRLLIQAGYELNVQDHDGWTPLHAAAHWGVKEACSILAEALCDMDIRNKLGQTPFDVADEGLVEHLEMLQKKQDVLRSEKETRNKLIESDLNSKFQSGLFKNKEKMLYEEEIPKSQDTEEENKESSSSSSEEEEGEDEVSESETEKEADKKPEATVNHSNSEIKSRIMEQIPAPAQNTFSASSARRLSSLFNKAEEPKDESPSSWRLGLRKTGSHNMLSEVANSREALRDRGSSIYRSSSSPRISALLDDKDKERENKSYFSMLVPRRLSSTSDIEEKENRESAVNLVRSGSHTRQLWRDEAKGSETPQTIAPSTYTSTYLKRTPYKSQADSTAEKTADSVSSSTPLCVITNRPAPSTANGVPAATVFSSAGTDPSVEAREKRRSYLTPVRDEEAESLRKARSRQARQTRRSTQGVTLTDLQEAEKTFSRSRAERQAQEQPGEKLEDPGGLEGSTKKQEPSAAPTKGAGEGRSLEEEPIYHRLRYPTQPDKPTTPVSPSASRPSLYTGSHLLRTSRASGPDSENSETSTHATAAKEMDTSEKGEADLDDQSSNRLSVRERRRAKDRRRGTGINFWTNDEDETDVSEEVKEALHERLSRLESGGTNPTSSDSYSDRASARARREAREARLASLTSRVEEDSNRDYKKLYESALTENQKLKTKLQEAQLELADIKAKLEKMAQQKQEKTSDRSSVLEVEKRERRALERKMSEMEEEMKVLTELKSDNQRLKDENGALIRVISKLSK</sequence>
<feature type="chain" id="PRO_0000067029" description="Protein phosphatase 1 regulatory subunit 12B">
    <location>
        <begin position="1"/>
        <end position="976"/>
    </location>
</feature>
<feature type="repeat" description="ANK 1">
    <location>
        <begin position="57"/>
        <end position="86"/>
    </location>
</feature>
<feature type="repeat" description="ANK 2">
    <location>
        <begin position="90"/>
        <end position="119"/>
    </location>
</feature>
<feature type="repeat" description="ANK 3">
    <location>
        <begin position="123"/>
        <end position="152"/>
    </location>
</feature>
<feature type="repeat" description="ANK 4">
    <location>
        <begin position="216"/>
        <end position="245"/>
    </location>
</feature>
<feature type="repeat" description="ANK 5">
    <location>
        <begin position="249"/>
        <end position="278"/>
    </location>
</feature>
<feature type="region of interest" description="Disordered" evidence="3">
    <location>
        <begin position="1"/>
        <end position="52"/>
    </location>
</feature>
<feature type="region of interest" description="Disordered" evidence="3">
    <location>
        <begin position="342"/>
        <end position="489"/>
    </location>
</feature>
<feature type="region of interest" description="Disordered" evidence="3">
    <location>
        <begin position="503"/>
        <end position="873"/>
    </location>
</feature>
<feature type="compositionally biased region" description="Basic and acidic residues" evidence="3">
    <location>
        <begin position="1"/>
        <end position="24"/>
    </location>
</feature>
<feature type="compositionally biased region" description="Acidic residues" evidence="3">
    <location>
        <begin position="362"/>
        <end position="374"/>
    </location>
</feature>
<feature type="compositionally biased region" description="Basic and acidic residues" evidence="3">
    <location>
        <begin position="375"/>
        <end position="385"/>
    </location>
</feature>
<feature type="compositionally biased region" description="Low complexity" evidence="3">
    <location>
        <begin position="411"/>
        <end position="423"/>
    </location>
</feature>
<feature type="compositionally biased region" description="Low complexity" evidence="3">
    <location>
        <begin position="465"/>
        <end position="477"/>
    </location>
</feature>
<feature type="compositionally biased region" description="Basic and acidic residues" evidence="3">
    <location>
        <begin position="480"/>
        <end position="489"/>
    </location>
</feature>
<feature type="compositionally biased region" description="Polar residues" evidence="3">
    <location>
        <begin position="538"/>
        <end position="564"/>
    </location>
</feature>
<feature type="compositionally biased region" description="Basic and acidic residues" evidence="3">
    <location>
        <begin position="622"/>
        <end position="631"/>
    </location>
</feature>
<feature type="compositionally biased region" description="Basic residues" evidence="3">
    <location>
        <begin position="632"/>
        <end position="642"/>
    </location>
</feature>
<feature type="compositionally biased region" description="Basic and acidic residues" evidence="3">
    <location>
        <begin position="655"/>
        <end position="679"/>
    </location>
</feature>
<feature type="compositionally biased region" description="Polar residues" evidence="3">
    <location>
        <begin position="722"/>
        <end position="739"/>
    </location>
</feature>
<feature type="compositionally biased region" description="Polar residues" evidence="3">
    <location>
        <begin position="747"/>
        <end position="763"/>
    </location>
</feature>
<feature type="compositionally biased region" description="Basic and acidic residues" evidence="3">
    <location>
        <begin position="765"/>
        <end position="777"/>
    </location>
</feature>
<feature type="compositionally biased region" description="Basic residues" evidence="3">
    <location>
        <begin position="791"/>
        <end position="801"/>
    </location>
</feature>
<feature type="compositionally biased region" description="Basic and acidic residues" evidence="3">
    <location>
        <begin position="818"/>
        <end position="830"/>
    </location>
</feature>
<feature type="compositionally biased region" description="Basic and acidic residues" evidence="3">
    <location>
        <begin position="844"/>
        <end position="860"/>
    </location>
</feature>
<feature type="modified residue" description="Phosphoserine" evidence="5">
    <location>
        <position position="29"/>
    </location>
</feature>
<feature type="modified residue" description="Phosphothreonine" evidence="5">
    <location>
        <position position="444"/>
    </location>
</feature>
<feature type="modified residue" description="Phosphoserine" evidence="5">
    <location>
        <position position="502"/>
    </location>
</feature>
<feature type="modified residue" description="Phosphothreonine" evidence="2">
    <location>
        <position position="645"/>
    </location>
</feature>
<feature type="modified residue" description="Phosphothreonine" evidence="5">
    <location>
        <position position="802"/>
    </location>
</feature>
<feature type="modified residue" description="Phosphoserine" evidence="5">
    <location>
        <position position="833"/>
    </location>
</feature>
<feature type="modified residue" description="Phosphoserine" evidence="5">
    <location>
        <position position="941"/>
    </location>
</feature>
<feature type="splice variant" id="VSP_009260" description="In isoform 2." evidence="4">
    <original>ACIDENLD</original>
    <variation>RNHKPRGS</variation>
    <location>
        <begin position="98"/>
        <end position="105"/>
    </location>
</feature>
<feature type="splice variant" id="VSP_009261" description="In isoform 2." evidence="4">
    <location>
        <begin position="106"/>
        <end position="976"/>
    </location>
</feature>
<dbReference type="EMBL" id="AK007727">
    <property type="protein sequence ID" value="BAB25216.1"/>
    <property type="molecule type" value="mRNA"/>
</dbReference>
<dbReference type="EMBL" id="AK042847">
    <property type="protein sequence ID" value="BAC31381.1"/>
    <property type="molecule type" value="mRNA"/>
</dbReference>
<dbReference type="EMBL" id="AK046012">
    <property type="protein sequence ID" value="BAC32572.1"/>
    <property type="molecule type" value="mRNA"/>
</dbReference>
<dbReference type="EMBL" id="AK046167">
    <property type="protein sequence ID" value="BAC32618.1"/>
    <property type="molecule type" value="mRNA"/>
</dbReference>
<dbReference type="EMBL" id="AK080855">
    <property type="protein sequence ID" value="BAC38046.1"/>
    <property type="molecule type" value="mRNA"/>
</dbReference>
<dbReference type="EMBL" id="AC117827">
    <property type="status" value="NOT_ANNOTATED_CDS"/>
    <property type="molecule type" value="Genomic_DNA"/>
</dbReference>
<dbReference type="EMBL" id="AC131591">
    <property type="status" value="NOT_ANNOTATED_CDS"/>
    <property type="molecule type" value="Genomic_DNA"/>
</dbReference>
<dbReference type="CCDS" id="CCDS87881.1">
    <molecule id="Q8BG95-1"/>
</dbReference>
<dbReference type="RefSeq" id="NP_001355756.1">
    <molecule id="Q8BG95-1"/>
    <property type="nucleotide sequence ID" value="NM_001368827.1"/>
</dbReference>
<dbReference type="RefSeq" id="XP_006529773.1">
    <property type="nucleotide sequence ID" value="XM_006529710.2"/>
</dbReference>
<dbReference type="SMR" id="Q8BG95"/>
<dbReference type="BioGRID" id="236730">
    <property type="interactions" value="8"/>
</dbReference>
<dbReference type="FunCoup" id="Q8BG95">
    <property type="interactions" value="487"/>
</dbReference>
<dbReference type="IntAct" id="Q8BG95">
    <property type="interactions" value="1"/>
</dbReference>
<dbReference type="STRING" id="10090.ENSMUSP00000131406"/>
<dbReference type="GlyGen" id="Q8BG95">
    <property type="glycosylation" value="5 sites, 1 N-linked glycan (1 site), 1 O-linked glycan (4 sites)"/>
</dbReference>
<dbReference type="iPTMnet" id="Q8BG95"/>
<dbReference type="PhosphoSitePlus" id="Q8BG95"/>
<dbReference type="jPOST" id="Q8BG95"/>
<dbReference type="PaxDb" id="10090-ENSMUSP00000131406"/>
<dbReference type="PeptideAtlas" id="Q8BG95"/>
<dbReference type="ProteomicsDB" id="287538">
    <molecule id="Q8BG95-1"/>
</dbReference>
<dbReference type="ProteomicsDB" id="287539">
    <molecule id="Q8BG95-2"/>
</dbReference>
<dbReference type="Pumba" id="Q8BG95"/>
<dbReference type="Antibodypedia" id="20653">
    <property type="antibodies" value="60 antibodies from 17 providers"/>
</dbReference>
<dbReference type="Ensembl" id="ENSMUST00000045665.13">
    <molecule id="Q8BG95-1"/>
    <property type="protein sequence ID" value="ENSMUSP00000047463.7"/>
    <property type="gene ID" value="ENSMUSG00000073557.13"/>
</dbReference>
<dbReference type="Ensembl" id="ENSMUST00000112163.2">
    <molecule id="Q8BG95-2"/>
    <property type="protein sequence ID" value="ENSMUSP00000107788.2"/>
    <property type="gene ID" value="ENSMUSG00000073557.13"/>
</dbReference>
<dbReference type="GeneID" id="329251"/>
<dbReference type="AGR" id="MGI:1916417"/>
<dbReference type="MGI" id="MGI:1916417">
    <property type="gene designation" value="Ppp1r12b"/>
</dbReference>
<dbReference type="VEuPathDB" id="HostDB:ENSMUSG00000073557"/>
<dbReference type="eggNOG" id="KOG0505">
    <property type="taxonomic scope" value="Eukaryota"/>
</dbReference>
<dbReference type="GeneTree" id="ENSGT00940000157067"/>
<dbReference type="HOGENOM" id="CLU_000134_54_0_1"/>
<dbReference type="InParanoid" id="Q8BG95"/>
<dbReference type="Reactome" id="R-MMU-2565942">
    <property type="pathway name" value="Regulation of PLK1 Activity at G2/M Transition"/>
</dbReference>
<dbReference type="Reactome" id="R-MMU-5625740">
    <property type="pathway name" value="RHO GTPases activate PKNs"/>
</dbReference>
<dbReference type="Reactome" id="R-MMU-5627123">
    <property type="pathway name" value="RHO GTPases activate PAKs"/>
</dbReference>
<dbReference type="BioGRID-ORCS" id="329251">
    <property type="hits" value="0 hits in 78 CRISPR screens"/>
</dbReference>
<dbReference type="CD-CODE" id="CE726F99">
    <property type="entry name" value="Postsynaptic density"/>
</dbReference>
<dbReference type="ChiTaRS" id="Ppp1r12b">
    <property type="organism name" value="mouse"/>
</dbReference>
<dbReference type="PRO" id="PR:Q8BG95"/>
<dbReference type="Proteomes" id="UP000000589">
    <property type="component" value="Chromosome 1"/>
</dbReference>
<dbReference type="RNAct" id="Q8BG95">
    <property type="molecule type" value="protein"/>
</dbReference>
<dbReference type="Bgee" id="ENSMUSG00000073557">
    <property type="expression patterns" value="Expressed in rostral migratory stream and 203 other cell types or tissues"/>
</dbReference>
<dbReference type="ExpressionAtlas" id="Q8BG95">
    <property type="expression patterns" value="baseline and differential"/>
</dbReference>
<dbReference type="GO" id="GO:0031672">
    <property type="term" value="C:A band"/>
    <property type="evidence" value="ECO:0000314"/>
    <property type="project" value="UniProtKB"/>
</dbReference>
<dbReference type="GO" id="GO:0001725">
    <property type="term" value="C:stress fiber"/>
    <property type="evidence" value="ECO:0007669"/>
    <property type="project" value="UniProtKB-SubCell"/>
</dbReference>
<dbReference type="GO" id="GO:0030018">
    <property type="term" value="C:Z disc"/>
    <property type="evidence" value="ECO:0000314"/>
    <property type="project" value="UniProtKB"/>
</dbReference>
<dbReference type="GO" id="GO:0019208">
    <property type="term" value="F:phosphatase regulator activity"/>
    <property type="evidence" value="ECO:0007669"/>
    <property type="project" value="InterPro"/>
</dbReference>
<dbReference type="GO" id="GO:0019901">
    <property type="term" value="F:protein kinase binding"/>
    <property type="evidence" value="ECO:0007669"/>
    <property type="project" value="InterPro"/>
</dbReference>
<dbReference type="GO" id="GO:0007165">
    <property type="term" value="P:signal transduction"/>
    <property type="evidence" value="ECO:0007669"/>
    <property type="project" value="InterPro"/>
</dbReference>
<dbReference type="CDD" id="cd21944">
    <property type="entry name" value="IPD_MYPT1"/>
    <property type="match status" value="1"/>
</dbReference>
<dbReference type="FunFam" id="1.25.40.20:FF:000004">
    <property type="entry name" value="Phosphatase 1 regulatory subunit 12A"/>
    <property type="match status" value="1"/>
</dbReference>
<dbReference type="FunFam" id="1.25.40.20:FF:000007">
    <property type="entry name" value="Phosphatase 1 regulatory subunit 12A"/>
    <property type="match status" value="1"/>
</dbReference>
<dbReference type="Gene3D" id="6.10.140.390">
    <property type="match status" value="1"/>
</dbReference>
<dbReference type="Gene3D" id="6.10.250.1820">
    <property type="match status" value="1"/>
</dbReference>
<dbReference type="Gene3D" id="1.25.40.20">
    <property type="entry name" value="Ankyrin repeat-containing domain"/>
    <property type="match status" value="2"/>
</dbReference>
<dbReference type="InterPro" id="IPR002110">
    <property type="entry name" value="Ankyrin_rpt"/>
</dbReference>
<dbReference type="InterPro" id="IPR036770">
    <property type="entry name" value="Ankyrin_rpt-contain_sf"/>
</dbReference>
<dbReference type="InterPro" id="IPR017401">
    <property type="entry name" value="MYPT1/MYPT2/Mbs85"/>
</dbReference>
<dbReference type="InterPro" id="IPR051226">
    <property type="entry name" value="PP1_Regulatory_Subunit"/>
</dbReference>
<dbReference type="InterPro" id="IPR031775">
    <property type="entry name" value="PRKG1_interact"/>
</dbReference>
<dbReference type="PANTHER" id="PTHR24179">
    <property type="entry name" value="PROTEIN PHOSPHATASE 1 REGULATORY SUBUNIT 12"/>
    <property type="match status" value="1"/>
</dbReference>
<dbReference type="PANTHER" id="PTHR24179:SF18">
    <property type="entry name" value="PROTEIN PHOSPHATASE 1 REGULATORY SUBUNIT 12B"/>
    <property type="match status" value="1"/>
</dbReference>
<dbReference type="Pfam" id="PF12796">
    <property type="entry name" value="Ank_2"/>
    <property type="match status" value="2"/>
</dbReference>
<dbReference type="Pfam" id="PF15898">
    <property type="entry name" value="PRKG1_interact"/>
    <property type="match status" value="1"/>
</dbReference>
<dbReference type="PIRSF" id="PIRSF038141">
    <property type="entry name" value="PP1_12ABC_vert"/>
    <property type="match status" value="1"/>
</dbReference>
<dbReference type="SMART" id="SM00248">
    <property type="entry name" value="ANK"/>
    <property type="match status" value="5"/>
</dbReference>
<dbReference type="SUPFAM" id="SSF48403">
    <property type="entry name" value="Ankyrin repeat"/>
    <property type="match status" value="1"/>
</dbReference>
<dbReference type="PROSITE" id="PS50297">
    <property type="entry name" value="ANK_REP_REGION"/>
    <property type="match status" value="1"/>
</dbReference>
<dbReference type="PROSITE" id="PS50088">
    <property type="entry name" value="ANK_REPEAT"/>
    <property type="match status" value="4"/>
</dbReference>
<name>MYPT2_MOUSE</name>
<keyword id="KW-0025">Alternative splicing</keyword>
<keyword id="KW-0040">ANK repeat</keyword>
<keyword id="KW-0963">Cytoplasm</keyword>
<keyword id="KW-0206">Cytoskeleton</keyword>
<keyword id="KW-0597">Phosphoprotein</keyword>
<keyword id="KW-1185">Reference proteome</keyword>
<keyword id="KW-0677">Repeat</keyword>
<reference key="1">
    <citation type="journal article" date="2005" name="Science">
        <title>The transcriptional landscape of the mammalian genome.</title>
        <authorList>
            <person name="Carninci P."/>
            <person name="Kasukawa T."/>
            <person name="Katayama S."/>
            <person name="Gough J."/>
            <person name="Frith M.C."/>
            <person name="Maeda N."/>
            <person name="Oyama R."/>
            <person name="Ravasi T."/>
            <person name="Lenhard B."/>
            <person name="Wells C."/>
            <person name="Kodzius R."/>
            <person name="Shimokawa K."/>
            <person name="Bajic V.B."/>
            <person name="Brenner S.E."/>
            <person name="Batalov S."/>
            <person name="Forrest A.R."/>
            <person name="Zavolan M."/>
            <person name="Davis M.J."/>
            <person name="Wilming L.G."/>
            <person name="Aidinis V."/>
            <person name="Allen J.E."/>
            <person name="Ambesi-Impiombato A."/>
            <person name="Apweiler R."/>
            <person name="Aturaliya R.N."/>
            <person name="Bailey T.L."/>
            <person name="Bansal M."/>
            <person name="Baxter L."/>
            <person name="Beisel K.W."/>
            <person name="Bersano T."/>
            <person name="Bono H."/>
            <person name="Chalk A.M."/>
            <person name="Chiu K.P."/>
            <person name="Choudhary V."/>
            <person name="Christoffels A."/>
            <person name="Clutterbuck D.R."/>
            <person name="Crowe M.L."/>
            <person name="Dalla E."/>
            <person name="Dalrymple B.P."/>
            <person name="de Bono B."/>
            <person name="Della Gatta G."/>
            <person name="di Bernardo D."/>
            <person name="Down T."/>
            <person name="Engstrom P."/>
            <person name="Fagiolini M."/>
            <person name="Faulkner G."/>
            <person name="Fletcher C.F."/>
            <person name="Fukushima T."/>
            <person name="Furuno M."/>
            <person name="Futaki S."/>
            <person name="Gariboldi M."/>
            <person name="Georgii-Hemming P."/>
            <person name="Gingeras T.R."/>
            <person name="Gojobori T."/>
            <person name="Green R.E."/>
            <person name="Gustincich S."/>
            <person name="Harbers M."/>
            <person name="Hayashi Y."/>
            <person name="Hensch T.K."/>
            <person name="Hirokawa N."/>
            <person name="Hill D."/>
            <person name="Huminiecki L."/>
            <person name="Iacono M."/>
            <person name="Ikeo K."/>
            <person name="Iwama A."/>
            <person name="Ishikawa T."/>
            <person name="Jakt M."/>
            <person name="Kanapin A."/>
            <person name="Katoh M."/>
            <person name="Kawasawa Y."/>
            <person name="Kelso J."/>
            <person name="Kitamura H."/>
            <person name="Kitano H."/>
            <person name="Kollias G."/>
            <person name="Krishnan S.P."/>
            <person name="Kruger A."/>
            <person name="Kummerfeld S.K."/>
            <person name="Kurochkin I.V."/>
            <person name="Lareau L.F."/>
            <person name="Lazarevic D."/>
            <person name="Lipovich L."/>
            <person name="Liu J."/>
            <person name="Liuni S."/>
            <person name="McWilliam S."/>
            <person name="Madan Babu M."/>
            <person name="Madera M."/>
            <person name="Marchionni L."/>
            <person name="Matsuda H."/>
            <person name="Matsuzawa S."/>
            <person name="Miki H."/>
            <person name="Mignone F."/>
            <person name="Miyake S."/>
            <person name="Morris K."/>
            <person name="Mottagui-Tabar S."/>
            <person name="Mulder N."/>
            <person name="Nakano N."/>
            <person name="Nakauchi H."/>
            <person name="Ng P."/>
            <person name="Nilsson R."/>
            <person name="Nishiguchi S."/>
            <person name="Nishikawa S."/>
            <person name="Nori F."/>
            <person name="Ohara O."/>
            <person name="Okazaki Y."/>
            <person name="Orlando V."/>
            <person name="Pang K.C."/>
            <person name="Pavan W.J."/>
            <person name="Pavesi G."/>
            <person name="Pesole G."/>
            <person name="Petrovsky N."/>
            <person name="Piazza S."/>
            <person name="Reed J."/>
            <person name="Reid J.F."/>
            <person name="Ring B.Z."/>
            <person name="Ringwald M."/>
            <person name="Rost B."/>
            <person name="Ruan Y."/>
            <person name="Salzberg S.L."/>
            <person name="Sandelin A."/>
            <person name="Schneider C."/>
            <person name="Schoenbach C."/>
            <person name="Sekiguchi K."/>
            <person name="Semple C.A."/>
            <person name="Seno S."/>
            <person name="Sessa L."/>
            <person name="Sheng Y."/>
            <person name="Shibata Y."/>
            <person name="Shimada H."/>
            <person name="Shimada K."/>
            <person name="Silva D."/>
            <person name="Sinclair B."/>
            <person name="Sperling S."/>
            <person name="Stupka E."/>
            <person name="Sugiura K."/>
            <person name="Sultana R."/>
            <person name="Takenaka Y."/>
            <person name="Taki K."/>
            <person name="Tammoja K."/>
            <person name="Tan S.L."/>
            <person name="Tang S."/>
            <person name="Taylor M.S."/>
            <person name="Tegner J."/>
            <person name="Teichmann S.A."/>
            <person name="Ueda H.R."/>
            <person name="van Nimwegen E."/>
            <person name="Verardo R."/>
            <person name="Wei C.L."/>
            <person name="Yagi K."/>
            <person name="Yamanishi H."/>
            <person name="Zabarovsky E."/>
            <person name="Zhu S."/>
            <person name="Zimmer A."/>
            <person name="Hide W."/>
            <person name="Bult C."/>
            <person name="Grimmond S.M."/>
            <person name="Teasdale R.D."/>
            <person name="Liu E.T."/>
            <person name="Brusic V."/>
            <person name="Quackenbush J."/>
            <person name="Wahlestedt C."/>
            <person name="Mattick J.S."/>
            <person name="Hume D.A."/>
            <person name="Kai C."/>
            <person name="Sasaki D."/>
            <person name="Tomaru Y."/>
            <person name="Fukuda S."/>
            <person name="Kanamori-Katayama M."/>
            <person name="Suzuki M."/>
            <person name="Aoki J."/>
            <person name="Arakawa T."/>
            <person name="Iida J."/>
            <person name="Imamura K."/>
            <person name="Itoh M."/>
            <person name="Kato T."/>
            <person name="Kawaji H."/>
            <person name="Kawagashira N."/>
            <person name="Kawashima T."/>
            <person name="Kojima M."/>
            <person name="Kondo S."/>
            <person name="Konno H."/>
            <person name="Nakano K."/>
            <person name="Ninomiya N."/>
            <person name="Nishio T."/>
            <person name="Okada M."/>
            <person name="Plessy C."/>
            <person name="Shibata K."/>
            <person name="Shiraki T."/>
            <person name="Suzuki S."/>
            <person name="Tagami M."/>
            <person name="Waki K."/>
            <person name="Watahiki A."/>
            <person name="Okamura-Oho Y."/>
            <person name="Suzuki H."/>
            <person name="Kawai J."/>
            <person name="Hayashizaki Y."/>
        </authorList>
    </citation>
    <scope>NUCLEOTIDE SEQUENCE [LARGE SCALE MRNA] (ISOFORM 2)</scope>
    <scope>NUCLEOTIDE SEQUENCE [LARGE SCALE MRNA] OF 1-484 (ISOFORM 1)</scope>
    <source>
        <strain>C57BL/6J</strain>
        <tissue>Brain</tissue>
        <tissue>Cerebellum</tissue>
        <tissue>Pancreas</tissue>
    </source>
</reference>
<reference key="2">
    <citation type="journal article" date="2009" name="PLoS Biol.">
        <title>Lineage-specific biology revealed by a finished genome assembly of the mouse.</title>
        <authorList>
            <person name="Church D.M."/>
            <person name="Goodstadt L."/>
            <person name="Hillier L.W."/>
            <person name="Zody M.C."/>
            <person name="Goldstein S."/>
            <person name="She X."/>
            <person name="Bult C.J."/>
            <person name="Agarwala R."/>
            <person name="Cherry J.L."/>
            <person name="DiCuccio M."/>
            <person name="Hlavina W."/>
            <person name="Kapustin Y."/>
            <person name="Meric P."/>
            <person name="Maglott D."/>
            <person name="Birtle Z."/>
            <person name="Marques A.C."/>
            <person name="Graves T."/>
            <person name="Zhou S."/>
            <person name="Teague B."/>
            <person name="Potamousis K."/>
            <person name="Churas C."/>
            <person name="Place M."/>
            <person name="Herschleb J."/>
            <person name="Runnheim R."/>
            <person name="Forrest D."/>
            <person name="Amos-Landgraf J."/>
            <person name="Schwartz D.C."/>
            <person name="Cheng Z."/>
            <person name="Lindblad-Toh K."/>
            <person name="Eichler E.E."/>
            <person name="Ponting C.P."/>
        </authorList>
    </citation>
    <scope>NUCLEOTIDE SEQUENCE [LARGE SCALE GENOMIC DNA]</scope>
    <source>
        <strain>C57BL/6J</strain>
    </source>
</reference>
<reference key="3">
    <citation type="journal article" date="2007" name="Proc. Natl. Acad. Sci. U.S.A.">
        <title>Large-scale phosphorylation analysis of mouse liver.</title>
        <authorList>
            <person name="Villen J."/>
            <person name="Beausoleil S.A."/>
            <person name="Gerber S.A."/>
            <person name="Gygi S.P."/>
        </authorList>
    </citation>
    <scope>IDENTIFICATION BY MASS SPECTROMETRY [LARGE SCALE ANALYSIS]</scope>
    <source>
        <tissue>Liver</tissue>
    </source>
</reference>
<reference key="4">
    <citation type="journal article" date="2010" name="Cell">
        <title>A tissue-specific atlas of mouse protein phosphorylation and expression.</title>
        <authorList>
            <person name="Huttlin E.L."/>
            <person name="Jedrychowski M.P."/>
            <person name="Elias J.E."/>
            <person name="Goswami T."/>
            <person name="Rad R."/>
            <person name="Beausoleil S.A."/>
            <person name="Villen J."/>
            <person name="Haas W."/>
            <person name="Sowa M.E."/>
            <person name="Gygi S.P."/>
        </authorList>
    </citation>
    <scope>PHOSPHORYLATION [LARGE SCALE ANALYSIS] AT SER-29; THR-444; SER-502; THR-802; SER-833 AND SER-941</scope>
    <scope>IDENTIFICATION BY MASS SPECTROMETRY [LARGE SCALE ANALYSIS]</scope>
    <source>
        <tissue>Brain</tissue>
        <tissue>Brown adipose tissue</tissue>
        <tissue>Heart</tissue>
        <tissue>Kidney</tissue>
        <tissue>Lung</tissue>
        <tissue>Spleen</tissue>
        <tissue>Testis</tissue>
    </source>
</reference>
<comment type="function">
    <text evidence="1">Regulates myosin phosphatase activity. Augments Ca(2+) sensitivity of the contractile apparatus (By similarity).</text>
</comment>
<comment type="subunit">
    <text evidence="1">PP1 comprises a catalytic subunit, PPP1CA, PPP1CB or PPP1CC, and one or several targeting or regulatory subunits. PPP1R12B mediates binding to myosin. Isoform 3 and isoform 4 bind PPP1R12A, but not isoform 1 of PPP1R12B itself. Binds IL16 (By similarity).</text>
</comment>
<comment type="subcellular location">
    <subcellularLocation>
        <location evidence="2">Cytoplasm</location>
        <location evidence="2">Cytoskeleton</location>
    </subcellularLocation>
    <subcellularLocation>
        <location evidence="2">Cytoplasm</location>
        <location evidence="2">Cytoskeleton</location>
        <location evidence="2">Stress fiber</location>
    </subcellularLocation>
    <text evidence="2">Along actomyosin filaments.</text>
</comment>
<comment type="alternative products">
    <event type="alternative splicing"/>
    <isoform>
        <id>Q8BG95-1</id>
        <name>1</name>
        <sequence type="displayed"/>
    </isoform>
    <isoform>
        <id>Q8BG95-2</id>
        <name>2</name>
        <sequence type="described" ref="VSP_009260 VSP_009261"/>
    </isoform>
</comment>